<name>GAL1_STRLI</name>
<evidence type="ECO:0000255" key="1">
    <source>
        <dbReference type="HAMAP-Rule" id="MF_00246"/>
    </source>
</evidence>
<evidence type="ECO:0000256" key="2">
    <source>
        <dbReference type="SAM" id="MobiDB-lite"/>
    </source>
</evidence>
<evidence type="ECO:0000305" key="3"/>
<sequence>MGEAVGEPSASGSGSCTGRSRRGCGRRAGRENLIGEHTDYNDGFVMPSALPHQVAAVSRRERRILRLHSADVDADPVELRVADLAPASDKSWTAYPSGVLWALREAGHELTGADVHLASTVPSGAGLSSSAALEVRPLAMNDLYALALRGWQLARLCQRAENVYVGAPVGIMDQTASACCRGGHALFLDTRDLSQRQIPFDLAAEGMRLLVVDTRVKHSHSEGEYGKRRAGCEKGAALLGVDALCDVPYADLDAALERLGDEEEVRRLVRHVVTEDERVERVVALLESGDTRRIGAVLVEGHASLRDDFRISCPELDLVVDTALASAALGRRMTGGGFGGSAIVLVEAAAVDAVTKAVEDAFAAAGLKRPRVFEAVPRRGAAPGLTVSRAASPACTP</sequence>
<comment type="function">
    <text evidence="1">Catalyzes the transfer of the gamma-phosphate of ATP to D-galactose to form alpha-D-galactose-1-phosphate (Gal-1-P).</text>
</comment>
<comment type="catalytic activity">
    <reaction evidence="1">
        <text>alpha-D-galactose + ATP = alpha-D-galactose 1-phosphate + ADP + H(+)</text>
        <dbReference type="Rhea" id="RHEA:13553"/>
        <dbReference type="ChEBI" id="CHEBI:15378"/>
        <dbReference type="ChEBI" id="CHEBI:28061"/>
        <dbReference type="ChEBI" id="CHEBI:30616"/>
        <dbReference type="ChEBI" id="CHEBI:58336"/>
        <dbReference type="ChEBI" id="CHEBI:456216"/>
        <dbReference type="EC" id="2.7.1.6"/>
    </reaction>
</comment>
<comment type="pathway">
    <text evidence="1">Carbohydrate metabolism; galactose metabolism.</text>
</comment>
<comment type="subcellular location">
    <subcellularLocation>
        <location evidence="1">Cytoplasm</location>
    </subcellularLocation>
</comment>
<comment type="similarity">
    <text evidence="1">Belongs to the GHMP kinase family. GalK subfamily.</text>
</comment>
<comment type="sequence caution" evidence="3">
    <conflict type="frameshift">
        <sequence resource="EMBL-CDS" id="AAA26748"/>
    </conflict>
</comment>
<feature type="chain" id="PRO_0000184626" description="Galactokinase">
    <location>
        <begin position="1"/>
        <end position="397"/>
    </location>
</feature>
<feature type="region of interest" description="Disordered" evidence="2">
    <location>
        <begin position="1"/>
        <end position="27"/>
    </location>
</feature>
<feature type="compositionally biased region" description="Low complexity" evidence="2">
    <location>
        <begin position="9"/>
        <end position="18"/>
    </location>
</feature>
<feature type="active site" description="Proton acceptor" evidence="1">
    <location>
        <position position="173"/>
    </location>
</feature>
<feature type="binding site" evidence="1">
    <location>
        <begin position="36"/>
        <end position="39"/>
    </location>
    <ligand>
        <name>substrate</name>
    </ligand>
</feature>
<feature type="binding site" evidence="1">
    <location>
        <position position="69"/>
    </location>
    <ligand>
        <name>ATP</name>
        <dbReference type="ChEBI" id="CHEBI:30616"/>
    </ligand>
</feature>
<feature type="binding site" evidence="1">
    <location>
        <begin position="124"/>
        <end position="130"/>
    </location>
    <ligand>
        <name>ATP</name>
        <dbReference type="ChEBI" id="CHEBI:30616"/>
    </ligand>
</feature>
<feature type="binding site" evidence="1">
    <location>
        <position position="130"/>
    </location>
    <ligand>
        <name>Mg(2+)</name>
        <dbReference type="ChEBI" id="CHEBI:18420"/>
    </ligand>
</feature>
<feature type="binding site" evidence="1">
    <location>
        <position position="161"/>
    </location>
    <ligand>
        <name>Mg(2+)</name>
        <dbReference type="ChEBI" id="CHEBI:18420"/>
    </ligand>
</feature>
<feature type="binding site" evidence="1">
    <location>
        <position position="225"/>
    </location>
    <ligand>
        <name>substrate</name>
    </ligand>
</feature>
<feature type="site" description="Transition state stabilizer" evidence="1">
    <location>
        <position position="30"/>
    </location>
</feature>
<accession>P13227</accession>
<proteinExistence type="inferred from homology"/>
<reference key="1">
    <citation type="journal article" date="1988" name="J. Bacteriol.">
        <title>Gene organization and structure of the Streptomyces lividans gal operon.</title>
        <authorList>
            <person name="Adams C.W."/>
            <person name="Fornwald J.A."/>
            <person name="Schmidt F.J."/>
            <person name="Rosenberg M."/>
            <person name="Brawner M.E."/>
        </authorList>
    </citation>
    <scope>NUCLEOTIDE SEQUENCE [GENOMIC DNA]</scope>
</reference>
<reference key="2">
    <citation type="unpublished observations" date="1995-03">
        <authorList>
            <person name="Gibson T.J."/>
        </authorList>
    </citation>
    <scope>IDENTIFICATION OF PROBABLE FRAMESHIFTS</scope>
</reference>
<dbReference type="EC" id="2.7.1.6" evidence="1"/>
<dbReference type="EMBL" id="M18953">
    <property type="protein sequence ID" value="AAA26748.1"/>
    <property type="status" value="ALT_FRAME"/>
    <property type="molecule type" value="Genomic_DNA"/>
</dbReference>
<dbReference type="PIR" id="C28669">
    <property type="entry name" value="KISMG"/>
</dbReference>
<dbReference type="SMR" id="P13227"/>
<dbReference type="UniPathway" id="UPA00214"/>
<dbReference type="GO" id="GO:0005829">
    <property type="term" value="C:cytosol"/>
    <property type="evidence" value="ECO:0007669"/>
    <property type="project" value="TreeGrafter"/>
</dbReference>
<dbReference type="GO" id="GO:0005524">
    <property type="term" value="F:ATP binding"/>
    <property type="evidence" value="ECO:0007669"/>
    <property type="project" value="UniProtKB-UniRule"/>
</dbReference>
<dbReference type="GO" id="GO:0004335">
    <property type="term" value="F:galactokinase activity"/>
    <property type="evidence" value="ECO:0007669"/>
    <property type="project" value="UniProtKB-UniRule"/>
</dbReference>
<dbReference type="GO" id="GO:0000287">
    <property type="term" value="F:magnesium ion binding"/>
    <property type="evidence" value="ECO:0007669"/>
    <property type="project" value="UniProtKB-UniRule"/>
</dbReference>
<dbReference type="GO" id="GO:0006012">
    <property type="term" value="P:galactose metabolic process"/>
    <property type="evidence" value="ECO:0007669"/>
    <property type="project" value="UniProtKB-UniRule"/>
</dbReference>
<dbReference type="FunFam" id="3.30.230.10:FF:000017">
    <property type="entry name" value="Galactokinase"/>
    <property type="match status" value="1"/>
</dbReference>
<dbReference type="FunFam" id="3.30.70.890:FF:000001">
    <property type="entry name" value="Galactokinase"/>
    <property type="match status" value="1"/>
</dbReference>
<dbReference type="Gene3D" id="3.30.230.10">
    <property type="match status" value="1"/>
</dbReference>
<dbReference type="Gene3D" id="3.30.70.890">
    <property type="entry name" value="GHMP kinase, C-terminal domain"/>
    <property type="match status" value="1"/>
</dbReference>
<dbReference type="HAMAP" id="MF_00246">
    <property type="entry name" value="Galactokinase"/>
    <property type="match status" value="1"/>
</dbReference>
<dbReference type="InterPro" id="IPR000705">
    <property type="entry name" value="Galactokinase"/>
</dbReference>
<dbReference type="InterPro" id="IPR022963">
    <property type="entry name" value="Galactokinase_bac"/>
</dbReference>
<dbReference type="InterPro" id="IPR019741">
    <property type="entry name" value="Galactokinase_CS"/>
</dbReference>
<dbReference type="InterPro" id="IPR019539">
    <property type="entry name" value="GalKase_N"/>
</dbReference>
<dbReference type="InterPro" id="IPR013750">
    <property type="entry name" value="GHMP_kinase_C_dom"/>
</dbReference>
<dbReference type="InterPro" id="IPR036554">
    <property type="entry name" value="GHMP_kinase_C_sf"/>
</dbReference>
<dbReference type="InterPro" id="IPR006204">
    <property type="entry name" value="GHMP_kinase_N_dom"/>
</dbReference>
<dbReference type="InterPro" id="IPR006203">
    <property type="entry name" value="GHMP_knse_ATP-bd_CS"/>
</dbReference>
<dbReference type="InterPro" id="IPR006206">
    <property type="entry name" value="Mevalonate/galactokinase"/>
</dbReference>
<dbReference type="InterPro" id="IPR020568">
    <property type="entry name" value="Ribosomal_Su5_D2-typ_SF"/>
</dbReference>
<dbReference type="InterPro" id="IPR014721">
    <property type="entry name" value="Ribsml_uS5_D2-typ_fold_subgr"/>
</dbReference>
<dbReference type="NCBIfam" id="TIGR00131">
    <property type="entry name" value="gal_kin"/>
    <property type="match status" value="1"/>
</dbReference>
<dbReference type="PANTHER" id="PTHR10457:SF7">
    <property type="entry name" value="GALACTOKINASE-RELATED"/>
    <property type="match status" value="1"/>
</dbReference>
<dbReference type="PANTHER" id="PTHR10457">
    <property type="entry name" value="MEVALONATE KINASE/GALACTOKINASE"/>
    <property type="match status" value="1"/>
</dbReference>
<dbReference type="Pfam" id="PF10509">
    <property type="entry name" value="GalKase_gal_bdg"/>
    <property type="match status" value="1"/>
</dbReference>
<dbReference type="Pfam" id="PF08544">
    <property type="entry name" value="GHMP_kinases_C"/>
    <property type="match status" value="1"/>
</dbReference>
<dbReference type="Pfam" id="PF00288">
    <property type="entry name" value="GHMP_kinases_N"/>
    <property type="match status" value="1"/>
</dbReference>
<dbReference type="PIRSF" id="PIRSF000530">
    <property type="entry name" value="Galactokinase"/>
    <property type="match status" value="1"/>
</dbReference>
<dbReference type="PRINTS" id="PR00473">
    <property type="entry name" value="GALCTOKINASE"/>
</dbReference>
<dbReference type="PRINTS" id="PR00959">
    <property type="entry name" value="MEVGALKINASE"/>
</dbReference>
<dbReference type="SUPFAM" id="SSF55060">
    <property type="entry name" value="GHMP Kinase, C-terminal domain"/>
    <property type="match status" value="1"/>
</dbReference>
<dbReference type="SUPFAM" id="SSF54211">
    <property type="entry name" value="Ribosomal protein S5 domain 2-like"/>
    <property type="match status" value="1"/>
</dbReference>
<dbReference type="PROSITE" id="PS00106">
    <property type="entry name" value="GALACTOKINASE"/>
    <property type="match status" value="1"/>
</dbReference>
<dbReference type="PROSITE" id="PS00627">
    <property type="entry name" value="GHMP_KINASES_ATP"/>
    <property type="match status" value="1"/>
</dbReference>
<gene>
    <name evidence="1" type="primary">galK</name>
</gene>
<organism>
    <name type="scientific">Streptomyces lividans</name>
    <dbReference type="NCBI Taxonomy" id="1916"/>
    <lineage>
        <taxon>Bacteria</taxon>
        <taxon>Bacillati</taxon>
        <taxon>Actinomycetota</taxon>
        <taxon>Actinomycetes</taxon>
        <taxon>Kitasatosporales</taxon>
        <taxon>Streptomycetaceae</taxon>
        <taxon>Streptomyces</taxon>
    </lineage>
</organism>
<protein>
    <recommendedName>
        <fullName evidence="1">Galactokinase</fullName>
        <ecNumber evidence="1">2.7.1.6</ecNumber>
    </recommendedName>
    <alternativeName>
        <fullName evidence="1">Galactose kinase</fullName>
    </alternativeName>
</protein>
<keyword id="KW-0067">ATP-binding</keyword>
<keyword id="KW-0119">Carbohydrate metabolism</keyword>
<keyword id="KW-0963">Cytoplasm</keyword>
<keyword id="KW-0299">Galactose metabolism</keyword>
<keyword id="KW-0418">Kinase</keyword>
<keyword id="KW-0460">Magnesium</keyword>
<keyword id="KW-0479">Metal-binding</keyword>
<keyword id="KW-0547">Nucleotide-binding</keyword>
<keyword id="KW-0808">Transferase</keyword>